<dbReference type="EMBL" id="M22945">
    <property type="protein sequence ID" value="AAA43723.1"/>
    <property type="molecule type" value="Genomic_RNA"/>
</dbReference>
<dbReference type="SMR" id="P12441"/>
<dbReference type="GlyCosmos" id="P12441">
    <property type="glycosylation" value="6 sites, No reported glycans"/>
</dbReference>
<dbReference type="GO" id="GO:0020002">
    <property type="term" value="C:host cell plasma membrane"/>
    <property type="evidence" value="ECO:0007669"/>
    <property type="project" value="UniProtKB-SubCell"/>
</dbReference>
<dbReference type="GO" id="GO:0016020">
    <property type="term" value="C:membrane"/>
    <property type="evidence" value="ECO:0007669"/>
    <property type="project" value="UniProtKB-KW"/>
</dbReference>
<dbReference type="GO" id="GO:0019031">
    <property type="term" value="C:viral envelope"/>
    <property type="evidence" value="ECO:0007669"/>
    <property type="project" value="UniProtKB-KW"/>
</dbReference>
<dbReference type="GO" id="GO:0055036">
    <property type="term" value="C:virion membrane"/>
    <property type="evidence" value="ECO:0007669"/>
    <property type="project" value="UniProtKB-SubCell"/>
</dbReference>
<dbReference type="GO" id="GO:0046789">
    <property type="term" value="F:host cell surface receptor binding"/>
    <property type="evidence" value="ECO:0007669"/>
    <property type="project" value="InterPro"/>
</dbReference>
<dbReference type="GO" id="GO:0039654">
    <property type="term" value="P:fusion of virus membrane with host endosome membrane"/>
    <property type="evidence" value="ECO:0007669"/>
    <property type="project" value="UniProtKB-KW"/>
</dbReference>
<dbReference type="GO" id="GO:0019064">
    <property type="term" value="P:fusion of virus membrane with host plasma membrane"/>
    <property type="evidence" value="ECO:0007669"/>
    <property type="project" value="InterPro"/>
</dbReference>
<dbReference type="GO" id="GO:0046718">
    <property type="term" value="P:symbiont entry into host cell"/>
    <property type="evidence" value="ECO:0007669"/>
    <property type="project" value="UniProtKB-KW"/>
</dbReference>
<dbReference type="GO" id="GO:0019062">
    <property type="term" value="P:virion attachment to host cell"/>
    <property type="evidence" value="ECO:0007669"/>
    <property type="project" value="UniProtKB-KW"/>
</dbReference>
<dbReference type="Gene3D" id="3.90.209.20">
    <property type="match status" value="1"/>
</dbReference>
<dbReference type="Gene3D" id="2.10.77.10">
    <property type="entry name" value="Hemagglutinin Chain A, Domain 2"/>
    <property type="match status" value="1"/>
</dbReference>
<dbReference type="InterPro" id="IPR008980">
    <property type="entry name" value="Capsid_hemagglutn"/>
</dbReference>
<dbReference type="InterPro" id="IPR013828">
    <property type="entry name" value="Hemagglutn_HA1_a/b_dom_sf"/>
</dbReference>
<dbReference type="InterPro" id="IPR001364">
    <property type="entry name" value="Hemagglutn_influenz_A/B"/>
</dbReference>
<dbReference type="Pfam" id="PF00509">
    <property type="entry name" value="Hemagglutinin"/>
    <property type="match status" value="1"/>
</dbReference>
<dbReference type="SUPFAM" id="SSF49818">
    <property type="entry name" value="Viral protein domain"/>
    <property type="match status" value="1"/>
</dbReference>
<evidence type="ECO:0000250" key="1"/>
<evidence type="ECO:0000255" key="2"/>
<evidence type="ECO:0000305" key="3"/>
<organism>
    <name type="scientific">Influenza B virus (strain B/ID/1986)</name>
    <dbReference type="NCBI Taxonomy" id="11534"/>
    <lineage>
        <taxon>Viruses</taxon>
        <taxon>Riboviria</taxon>
        <taxon>Orthornavirae</taxon>
        <taxon>Negarnaviricota</taxon>
        <taxon>Polyploviricotina</taxon>
        <taxon>Insthoviricetes</taxon>
        <taxon>Articulavirales</taxon>
        <taxon>Orthomyxoviridae</taxon>
        <taxon>Betainfluenzavirus</taxon>
        <taxon>Betainfluenzavirus influenzae</taxon>
        <taxon>Influenza B virus</taxon>
    </lineage>
</organism>
<gene>
    <name type="primary">HA</name>
</gene>
<feature type="signal peptide">
    <location>
        <begin position="1" status="less than"/>
        <end position="12"/>
    </location>
</feature>
<feature type="chain" id="PRO_0000039111" description="Hemagglutinin HA1 chain">
    <location>
        <begin position="13"/>
        <end position="357"/>
    </location>
</feature>
<feature type="chain" id="PRO_0000039112" description="Hemagglutinin HA2 chain">
    <location>
        <begin position="359"/>
        <end position="366" status="greater than"/>
    </location>
</feature>
<feature type="glycosylation site" description="N-linked (GlcNAc...) asparagine; by host" evidence="2">
    <location>
        <position position="37"/>
    </location>
</feature>
<feature type="glycosylation site" description="N-linked (GlcNAc...) asparagine; by host" evidence="2">
    <location>
        <position position="71"/>
    </location>
</feature>
<feature type="glycosylation site" description="N-linked (GlcNAc...) asparagine; by host" evidence="2">
    <location>
        <position position="157"/>
    </location>
</feature>
<feature type="glycosylation site" description="N-linked (GlcNAc...) asparagine; by host" evidence="2">
    <location>
        <position position="177"/>
    </location>
</feature>
<feature type="glycosylation site" description="N-linked (GlcNAc...) asparagine; by host" evidence="2">
    <location>
        <position position="315"/>
    </location>
</feature>
<feature type="glycosylation site" description="N-linked (GlcNAc...) asparagine; by host" evidence="2">
    <location>
        <position position="344"/>
    </location>
</feature>
<feature type="non-terminal residue">
    <location>
        <position position="1"/>
    </location>
</feature>
<feature type="non-terminal residue">
    <location>
        <position position="366"/>
    </location>
</feature>
<organismHost>
    <name type="scientific">Homo sapiens</name>
    <name type="common">Human</name>
    <dbReference type="NCBI Taxonomy" id="9606"/>
</organismHost>
<keyword id="KW-1015">Disulfide bond</keyword>
<keyword id="KW-1170">Fusion of virus membrane with host endosomal membrane</keyword>
<keyword id="KW-1168">Fusion of virus membrane with host membrane</keyword>
<keyword id="KW-0325">Glycoprotein</keyword>
<keyword id="KW-0348">Hemagglutinin</keyword>
<keyword id="KW-1032">Host cell membrane</keyword>
<keyword id="KW-1043">Host membrane</keyword>
<keyword id="KW-0945">Host-virus interaction</keyword>
<keyword id="KW-0449">Lipoprotein</keyword>
<keyword id="KW-0472">Membrane</keyword>
<keyword id="KW-0564">Palmitate</keyword>
<keyword id="KW-0732">Signal</keyword>
<keyword id="KW-0812">Transmembrane</keyword>
<keyword id="KW-1161">Viral attachment to host cell</keyword>
<keyword id="KW-0261">Viral envelope protein</keyword>
<keyword id="KW-1162">Viral penetration into host cytoplasm</keyword>
<keyword id="KW-0946">Virion</keyword>
<keyword id="KW-1160">Virus entry into host cell</keyword>
<name>HEMA_INBID</name>
<protein>
    <recommendedName>
        <fullName>Hemagglutinin</fullName>
    </recommendedName>
    <component>
        <recommendedName>
            <fullName>Hemagglutinin HA1 chain</fullName>
        </recommendedName>
    </component>
    <component>
        <recommendedName>
            <fullName>Hemagglutinin HA2 chain</fullName>
        </recommendedName>
    </component>
</protein>
<reference key="1">
    <citation type="journal article" date="1988" name="Virology">
        <title>Influenza B virus evolution: co-circulating lineages and comparison of evolutionary pattern with those of influenza A and C viruses.</title>
        <authorList>
            <person name="Yamashita M."/>
            <person name="Krystal M."/>
            <person name="Fitch W.M."/>
            <person name="Palese P."/>
        </authorList>
    </citation>
    <scope>NUCLEOTIDE SEQUENCE [GENOMIC RNA]</scope>
</reference>
<proteinExistence type="inferred from homology"/>
<accession>P12441</accession>
<comment type="function">
    <text>Binds to sialic acid-containing receptors on the cell surface, bringing about the attachment of the virus particle to the cell. Plays a major role in the determination of host range restriction and virulence. Class I viral fusion protein. Responsible for penetration of the virus into the cell cytoplasm by mediating the fusion of the membrane of the endocytosed virus particle with the endosomal membrane. Low pH in endosomes induce an irreversible conformational change in HA2, releasing the fusion hydrophobic peptide. Several trimers are required to form a competent fusion pore.</text>
</comment>
<comment type="subunit">
    <text>Homotrimer of disulfide-linked HA1-HA2.</text>
</comment>
<comment type="subcellular location">
    <subcellularLocation>
        <location evidence="3">Virion membrane</location>
        <topology evidence="3">Single-pass type I membrane protein</topology>
    </subcellularLocation>
    <subcellularLocation>
        <location>Host apical cell membrane</location>
        <topology>Single-pass type I membrane protein</topology>
    </subcellularLocation>
    <text>Targeted to the apical plasma membrane in epithelial polarized cells through a signal present in the transmembrane domain. Associated with glycosphingolipid- and cholesterol-enriched detergent-resistant lipid rafts.</text>
</comment>
<comment type="PTM">
    <text evidence="1">In natural infection, inactive HA is matured into HA1 and HA2 outside the cell by one or more trypsin-like, arginine-specific endoprotease secreted by the bronchial epithelial cells. One identified protease that may be involved in this process is secreted in lungs by club cells (By similarity).</text>
</comment>
<comment type="PTM">
    <text evidence="1">Palmitoylated.</text>
</comment>
<comment type="miscellaneous">
    <text>Major glycoprotein, comprises over 80% of the envelope proteins present in virus particle.</text>
</comment>
<comment type="miscellaneous">
    <text>The extent of infection into host organism is determined by HA. Influenza viruses bud from the apical surface of polarized epithelial cells (e.g. bronchial epithelial cells) into lumen of lungs and are therefore usually pneumotropic. The reason is that HA is cleaved by tryptase clara which is restricted to lungs. However, HAs of H5 and H7 pantropic avian viruses subtypes can be cleaved by furin and subtilisin-type enzymes, allowing the virus to grow in other organs than lungs.</text>
</comment>
<comment type="miscellaneous">
    <text>The influenza B genome consist of 8 RNA segments. Genetic variation of hemagglutinin and/or neuraminidase genes results in the emergence of new influenza strains. The mechanism of variation can be the result of point mutations or the result of genetic reassortment between segments of two different strains.</text>
</comment>
<comment type="similarity">
    <text evidence="3">Belongs to the influenza viruses hemagglutinin family.</text>
</comment>
<sequence>IIVLLMVVTSNADRICTGITSSNSPHVVKTATQGEVNVTGVIPLTTTPTKSHFANLKGTKTRGKLCPKCLNCTDLDVALGRPKCMGTIPSAKASILHEVKPVTSGCFPIMHDRTKIRQLPNLLRGYENIRLSTHNVINAETAPGGPYIVGTSGSCPNVTNGNGFFATMAWAVPKNNNKTAMNPLTVEVPFICTEGEDQITVWGFHSDDETQMVKLYGDSKPQKFTSSANGVTTHYVSQIGGFPKQAEDGGLPQSGRIVVDYMVQKSGKTGTITYQRGILLPQKVWCASGRSKVIKRSLPLIGEADCLHEKYGGLNKSKPYYTGEHAKAIGNCPIWVKTPLKQANGTKYRPAAKLLKERGFFGAIAG</sequence>